<sequence length="888" mass="103724">MATTTDKQVSPTSPSFVYNLDHEDRNTSLKSGRAVLTDFNEQQFVKFDKGCSIETLLKERTSFIDQLLKKIWEHFFSKDECEQLTLVAVGGYGRGELQPYSDIDLLILGENFIELQPKIVEFITYLWDIGFEVGHAVRNLEDCIEAGREDVTTATNLLEARWLAGNYEQFLSLQNLFNLKSFWPSHEFFQAKLEEQEKRHKRYNDTLYQLEPNIKESPGGLRDIQTILWVAKRHFGASSLQELMQHNFISLQEYKEIQAAYLYLNRIRFALHRLKKRHEDRLLFDHQQQLAELLNHDDRPEHNDSIKAVEAFMKPYYQNAHIVARLNEILLQHFKEEIYHFAEDKIEPINPRFRIINNYLDVVKENLFAKNPTALLEIFIIIENYQHLIQGIRSRTIRLIRNHLHLIDDQFRSDPINKALFIEIFRQPKGVNAAVKRMYAYGILGAYLPSFKKITGLMQFNIFHAYTVDEHTILVIRNLRRFFIKQHAYEFPTAHQIATQLCKPEILLLAGLFHDIAKGRNGAHEKLGAVDAKAFSQKHNLNKNDTDLLSWLVLRHLDFSYVAQKKDLSDPEIIQQFAEKVGTQQRLDYLYLLTLADVRSTSDEVWNDWKNQLFLQLYHNTTQALDSSSSQPRDRVKQAIFNKEKASELLKKRGLIPMHFQGFWQAFEQTDFFNRQSAAEIARITRVLFEEDHEAINIHLQPTTSRGATELIIYMHDRDYLFAQFTQIIDKLDLNIVEAKIYSGEDDMTLVIIYLLNRESTSITDPMILTEIEETLKHQLFLKDDTMPPTQPEPRRIRVFEMPTHIQFQEINEELTELSISTKDIPGLLAKIGQAFKSCKIRVHDAKINTVGEKAEDTFMISSTTNESIHTRHSQEELKQALLNNIEQ</sequence>
<dbReference type="EC" id="2.7.7.59" evidence="1"/>
<dbReference type="EC" id="3.1.4.-" evidence="1"/>
<dbReference type="EMBL" id="CP000109">
    <property type="protein sequence ID" value="ABB41882.1"/>
    <property type="molecule type" value="Genomic_DNA"/>
</dbReference>
<dbReference type="SMR" id="Q31G41"/>
<dbReference type="STRING" id="317025.Tcr_1287"/>
<dbReference type="KEGG" id="tcx:Tcr_1287"/>
<dbReference type="eggNOG" id="COG2844">
    <property type="taxonomic scope" value="Bacteria"/>
</dbReference>
<dbReference type="HOGENOM" id="CLU_012833_0_0_6"/>
<dbReference type="OrthoDB" id="9758038at2"/>
<dbReference type="GO" id="GO:0008773">
    <property type="term" value="F:[protein-PII] uridylyltransferase activity"/>
    <property type="evidence" value="ECO:0007669"/>
    <property type="project" value="UniProtKB-UniRule"/>
</dbReference>
<dbReference type="GO" id="GO:0008081">
    <property type="term" value="F:phosphoric diester hydrolase activity"/>
    <property type="evidence" value="ECO:0007669"/>
    <property type="project" value="UniProtKB-UniRule"/>
</dbReference>
<dbReference type="GO" id="GO:0006808">
    <property type="term" value="P:regulation of nitrogen utilization"/>
    <property type="evidence" value="ECO:0007669"/>
    <property type="project" value="UniProtKB-UniRule"/>
</dbReference>
<dbReference type="CDD" id="cd04899">
    <property type="entry name" value="ACT_ACR-UUR-like_2"/>
    <property type="match status" value="1"/>
</dbReference>
<dbReference type="CDD" id="cd04900">
    <property type="entry name" value="ACT_UUR-like_1"/>
    <property type="match status" value="1"/>
</dbReference>
<dbReference type="CDD" id="cd00077">
    <property type="entry name" value="HDc"/>
    <property type="match status" value="1"/>
</dbReference>
<dbReference type="CDD" id="cd05401">
    <property type="entry name" value="NT_GlnE_GlnD_like"/>
    <property type="match status" value="1"/>
</dbReference>
<dbReference type="Gene3D" id="3.30.460.10">
    <property type="entry name" value="Beta Polymerase, domain 2"/>
    <property type="match status" value="1"/>
</dbReference>
<dbReference type="Gene3D" id="1.10.3090.10">
    <property type="entry name" value="cca-adding enzyme, domain 2"/>
    <property type="match status" value="1"/>
</dbReference>
<dbReference type="Gene3D" id="1.20.120.330">
    <property type="entry name" value="Nucleotidyltransferases domain 2"/>
    <property type="match status" value="1"/>
</dbReference>
<dbReference type="HAMAP" id="MF_00277">
    <property type="entry name" value="PII_uridylyl_transf"/>
    <property type="match status" value="1"/>
</dbReference>
<dbReference type="InterPro" id="IPR045865">
    <property type="entry name" value="ACT-like_dom_sf"/>
</dbReference>
<dbReference type="InterPro" id="IPR002912">
    <property type="entry name" value="ACT_dom"/>
</dbReference>
<dbReference type="InterPro" id="IPR003607">
    <property type="entry name" value="HD/PDEase_dom"/>
</dbReference>
<dbReference type="InterPro" id="IPR006674">
    <property type="entry name" value="HD_domain"/>
</dbReference>
<dbReference type="InterPro" id="IPR043519">
    <property type="entry name" value="NT_sf"/>
</dbReference>
<dbReference type="InterPro" id="IPR013546">
    <property type="entry name" value="PII_UdlTrfase/GS_AdlTrfase"/>
</dbReference>
<dbReference type="InterPro" id="IPR002934">
    <property type="entry name" value="Polymerase_NTP_transf_dom"/>
</dbReference>
<dbReference type="InterPro" id="IPR010043">
    <property type="entry name" value="UTase/UR"/>
</dbReference>
<dbReference type="NCBIfam" id="TIGR01693">
    <property type="entry name" value="UTase_glnD"/>
    <property type="match status" value="1"/>
</dbReference>
<dbReference type="PANTHER" id="PTHR47320">
    <property type="entry name" value="BIFUNCTIONAL URIDYLYLTRANSFERASE/URIDYLYL-REMOVING ENZYME"/>
    <property type="match status" value="1"/>
</dbReference>
<dbReference type="PANTHER" id="PTHR47320:SF1">
    <property type="entry name" value="BIFUNCTIONAL URIDYLYLTRANSFERASE_URIDYLYL-REMOVING ENZYME"/>
    <property type="match status" value="1"/>
</dbReference>
<dbReference type="Pfam" id="PF08335">
    <property type="entry name" value="GlnD_UR_UTase"/>
    <property type="match status" value="1"/>
</dbReference>
<dbReference type="Pfam" id="PF01966">
    <property type="entry name" value="HD"/>
    <property type="match status" value="1"/>
</dbReference>
<dbReference type="Pfam" id="PF01909">
    <property type="entry name" value="NTP_transf_2"/>
    <property type="match status" value="1"/>
</dbReference>
<dbReference type="PIRSF" id="PIRSF006288">
    <property type="entry name" value="PII_uridyltransf"/>
    <property type="match status" value="1"/>
</dbReference>
<dbReference type="SMART" id="SM00471">
    <property type="entry name" value="HDc"/>
    <property type="match status" value="1"/>
</dbReference>
<dbReference type="SUPFAM" id="SSF55021">
    <property type="entry name" value="ACT-like"/>
    <property type="match status" value="1"/>
</dbReference>
<dbReference type="SUPFAM" id="SSF109604">
    <property type="entry name" value="HD-domain/PDEase-like"/>
    <property type="match status" value="1"/>
</dbReference>
<dbReference type="SUPFAM" id="SSF81301">
    <property type="entry name" value="Nucleotidyltransferase"/>
    <property type="match status" value="1"/>
</dbReference>
<dbReference type="SUPFAM" id="SSF81593">
    <property type="entry name" value="Nucleotidyltransferase substrate binding subunit/domain"/>
    <property type="match status" value="1"/>
</dbReference>
<dbReference type="PROSITE" id="PS51671">
    <property type="entry name" value="ACT"/>
    <property type="match status" value="2"/>
</dbReference>
<dbReference type="PROSITE" id="PS51831">
    <property type="entry name" value="HD"/>
    <property type="match status" value="1"/>
</dbReference>
<reference key="1">
    <citation type="journal article" date="2006" name="PLoS Biol.">
        <title>The genome of deep-sea vent chemolithoautotroph Thiomicrospira crunogena XCL-2.</title>
        <authorList>
            <person name="Scott K.M."/>
            <person name="Sievert S.M."/>
            <person name="Abril F.N."/>
            <person name="Ball L.A."/>
            <person name="Barrett C.J."/>
            <person name="Blake R.A."/>
            <person name="Boller A.J."/>
            <person name="Chain P.S.G."/>
            <person name="Clark J.A."/>
            <person name="Davis C.R."/>
            <person name="Detter C."/>
            <person name="Do K.F."/>
            <person name="Dobrinski K.P."/>
            <person name="Faza B.I."/>
            <person name="Fitzpatrick K.A."/>
            <person name="Freyermuth S.K."/>
            <person name="Harmer T.L."/>
            <person name="Hauser L.J."/>
            <person name="Huegler M."/>
            <person name="Kerfeld C.A."/>
            <person name="Klotz M.G."/>
            <person name="Kong W.W."/>
            <person name="Land M."/>
            <person name="Lapidus A."/>
            <person name="Larimer F.W."/>
            <person name="Longo D.L."/>
            <person name="Lucas S."/>
            <person name="Malfatti S.A."/>
            <person name="Massey S.E."/>
            <person name="Martin D.D."/>
            <person name="McCuddin Z."/>
            <person name="Meyer F."/>
            <person name="Moore J.L."/>
            <person name="Ocampo L.H. Jr."/>
            <person name="Paul J.H."/>
            <person name="Paulsen I.T."/>
            <person name="Reep D.K."/>
            <person name="Ren Q."/>
            <person name="Ross R.L."/>
            <person name="Sato P.Y."/>
            <person name="Thomas P."/>
            <person name="Tinkham L.E."/>
            <person name="Zeruth G.T."/>
        </authorList>
    </citation>
    <scope>NUCLEOTIDE SEQUENCE [LARGE SCALE GENOMIC DNA]</scope>
    <source>
        <strain>DSM 25203 / XCL-2</strain>
    </source>
</reference>
<evidence type="ECO:0000255" key="1">
    <source>
        <dbReference type="HAMAP-Rule" id="MF_00277"/>
    </source>
</evidence>
<evidence type="ECO:0000255" key="2">
    <source>
        <dbReference type="PROSITE-ProRule" id="PRU01175"/>
    </source>
</evidence>
<name>GLND_HYDCU</name>
<gene>
    <name evidence="1" type="primary">glnD</name>
    <name type="ordered locus">Tcr_1287</name>
</gene>
<accession>Q31G41</accession>
<protein>
    <recommendedName>
        <fullName evidence="1">Bifunctional uridylyltransferase/uridylyl-removing enzyme</fullName>
        <shortName evidence="1">UTase/UR</shortName>
    </recommendedName>
    <alternativeName>
        <fullName evidence="1">Bifunctional [protein-PII] modification enzyme</fullName>
    </alternativeName>
    <alternativeName>
        <fullName evidence="1">Bifunctional nitrogen sensor protein</fullName>
    </alternativeName>
    <domain>
        <recommendedName>
            <fullName evidence="1">[Protein-PII] uridylyltransferase</fullName>
            <shortName evidence="1">PII uridylyltransferase</shortName>
            <shortName evidence="1">UTase</shortName>
            <ecNumber evidence="1">2.7.7.59</ecNumber>
        </recommendedName>
    </domain>
    <domain>
        <recommendedName>
            <fullName evidence="1">[Protein-PII]-UMP uridylyl-removing enzyme</fullName>
            <shortName evidence="1">UR</shortName>
            <ecNumber evidence="1">3.1.4.-</ecNumber>
        </recommendedName>
    </domain>
</protein>
<proteinExistence type="inferred from homology"/>
<organism>
    <name type="scientific">Hydrogenovibrio crunogenus (strain DSM 25203 / XCL-2)</name>
    <name type="common">Thiomicrospira crunogena</name>
    <dbReference type="NCBI Taxonomy" id="317025"/>
    <lineage>
        <taxon>Bacteria</taxon>
        <taxon>Pseudomonadati</taxon>
        <taxon>Pseudomonadota</taxon>
        <taxon>Gammaproteobacteria</taxon>
        <taxon>Thiotrichales</taxon>
        <taxon>Piscirickettsiaceae</taxon>
        <taxon>Hydrogenovibrio</taxon>
    </lineage>
</organism>
<feature type="chain" id="PRO_0000231696" description="Bifunctional uridylyltransferase/uridylyl-removing enzyme">
    <location>
        <begin position="1"/>
        <end position="888"/>
    </location>
</feature>
<feature type="domain" description="HD" evidence="2">
    <location>
        <begin position="468"/>
        <end position="590"/>
    </location>
</feature>
<feature type="domain" description="ACT 1" evidence="1">
    <location>
        <begin position="710"/>
        <end position="787"/>
    </location>
</feature>
<feature type="domain" description="ACT 2" evidence="1">
    <location>
        <begin position="817"/>
        <end position="888"/>
    </location>
</feature>
<feature type="region of interest" description="Uridylyltransferase">
    <location>
        <begin position="1"/>
        <end position="348"/>
    </location>
</feature>
<feature type="region of interest" description="Uridylyl-removing">
    <location>
        <begin position="349"/>
        <end position="709"/>
    </location>
</feature>
<keyword id="KW-0378">Hydrolase</keyword>
<keyword id="KW-0460">Magnesium</keyword>
<keyword id="KW-0511">Multifunctional enzyme</keyword>
<keyword id="KW-0548">Nucleotidyltransferase</keyword>
<keyword id="KW-0677">Repeat</keyword>
<keyword id="KW-0808">Transferase</keyword>
<comment type="function">
    <text evidence="1">Modifies, by uridylylation and deuridylylation, the PII regulatory proteins (GlnB and homologs), in response to the nitrogen status of the cell that GlnD senses through the glutamine level. Under low glutamine levels, catalyzes the conversion of the PII proteins and UTP to PII-UMP and PPi, while under higher glutamine levels, GlnD hydrolyzes PII-UMP to PII and UMP (deuridylylation). Thus, controls uridylylation state and activity of the PII proteins, and plays an important role in the regulation of nitrogen assimilation and metabolism.</text>
</comment>
<comment type="catalytic activity">
    <reaction evidence="1">
        <text>[protein-PII]-L-tyrosine + UTP = [protein-PII]-uridylyl-L-tyrosine + diphosphate</text>
        <dbReference type="Rhea" id="RHEA:13673"/>
        <dbReference type="Rhea" id="RHEA-COMP:12147"/>
        <dbReference type="Rhea" id="RHEA-COMP:12148"/>
        <dbReference type="ChEBI" id="CHEBI:33019"/>
        <dbReference type="ChEBI" id="CHEBI:46398"/>
        <dbReference type="ChEBI" id="CHEBI:46858"/>
        <dbReference type="ChEBI" id="CHEBI:90602"/>
        <dbReference type="EC" id="2.7.7.59"/>
    </reaction>
</comment>
<comment type="catalytic activity">
    <reaction evidence="1">
        <text>[protein-PII]-uridylyl-L-tyrosine + H2O = [protein-PII]-L-tyrosine + UMP + H(+)</text>
        <dbReference type="Rhea" id="RHEA:48600"/>
        <dbReference type="Rhea" id="RHEA-COMP:12147"/>
        <dbReference type="Rhea" id="RHEA-COMP:12148"/>
        <dbReference type="ChEBI" id="CHEBI:15377"/>
        <dbReference type="ChEBI" id="CHEBI:15378"/>
        <dbReference type="ChEBI" id="CHEBI:46858"/>
        <dbReference type="ChEBI" id="CHEBI:57865"/>
        <dbReference type="ChEBI" id="CHEBI:90602"/>
    </reaction>
</comment>
<comment type="cofactor">
    <cofactor evidence="1">
        <name>Mg(2+)</name>
        <dbReference type="ChEBI" id="CHEBI:18420"/>
    </cofactor>
</comment>
<comment type="activity regulation">
    <text evidence="1">Uridylyltransferase (UTase) activity is inhibited by glutamine, while glutamine activates uridylyl-removing (UR) activity.</text>
</comment>
<comment type="domain">
    <text evidence="1">Has four distinct domains: an N-terminal nucleotidyltransferase (NT) domain responsible for UTase activity, a central HD domain that encodes UR activity, and two C-terminal ACT domains that seem to have a role in glutamine sensing.</text>
</comment>
<comment type="similarity">
    <text evidence="1">Belongs to the GlnD family.</text>
</comment>